<feature type="chain" id="PRO_1000165729" description="Large ribosomal subunit protein uL2">
    <location>
        <begin position="1"/>
        <end position="276"/>
    </location>
</feature>
<feature type="region of interest" description="Disordered" evidence="2">
    <location>
        <begin position="208"/>
        <end position="276"/>
    </location>
</feature>
<feature type="compositionally biased region" description="Basic and acidic residues" evidence="2">
    <location>
        <begin position="230"/>
        <end position="240"/>
    </location>
</feature>
<feature type="compositionally biased region" description="Basic residues" evidence="2">
    <location>
        <begin position="255"/>
        <end position="276"/>
    </location>
</feature>
<protein>
    <recommendedName>
        <fullName evidence="1">Large ribosomal subunit protein uL2</fullName>
    </recommendedName>
    <alternativeName>
        <fullName evidence="3">50S ribosomal protein L2</fullName>
    </alternativeName>
</protein>
<name>RL2_CAMLR</name>
<accession>B9KEE3</accession>
<organism>
    <name type="scientific">Campylobacter lari (strain RM2100 / D67 / ATCC BAA-1060)</name>
    <dbReference type="NCBI Taxonomy" id="306263"/>
    <lineage>
        <taxon>Bacteria</taxon>
        <taxon>Pseudomonadati</taxon>
        <taxon>Campylobacterota</taxon>
        <taxon>Epsilonproteobacteria</taxon>
        <taxon>Campylobacterales</taxon>
        <taxon>Campylobacteraceae</taxon>
        <taxon>Campylobacter</taxon>
    </lineage>
</organism>
<dbReference type="EMBL" id="CP000932">
    <property type="protein sequence ID" value="ACM63428.1"/>
    <property type="molecule type" value="Genomic_DNA"/>
</dbReference>
<dbReference type="RefSeq" id="WP_012660814.1">
    <property type="nucleotide sequence ID" value="NC_012039.1"/>
</dbReference>
<dbReference type="SMR" id="B9KEE3"/>
<dbReference type="STRING" id="306263.Cla_0062"/>
<dbReference type="KEGG" id="cla:CLA_0062"/>
<dbReference type="PATRIC" id="fig|306263.5.peg.61"/>
<dbReference type="eggNOG" id="COG0090">
    <property type="taxonomic scope" value="Bacteria"/>
</dbReference>
<dbReference type="HOGENOM" id="CLU_036235_2_1_7"/>
<dbReference type="Proteomes" id="UP000007727">
    <property type="component" value="Chromosome"/>
</dbReference>
<dbReference type="GO" id="GO:0015934">
    <property type="term" value="C:large ribosomal subunit"/>
    <property type="evidence" value="ECO:0007669"/>
    <property type="project" value="InterPro"/>
</dbReference>
<dbReference type="GO" id="GO:0019843">
    <property type="term" value="F:rRNA binding"/>
    <property type="evidence" value="ECO:0007669"/>
    <property type="project" value="UniProtKB-UniRule"/>
</dbReference>
<dbReference type="GO" id="GO:0003735">
    <property type="term" value="F:structural constituent of ribosome"/>
    <property type="evidence" value="ECO:0007669"/>
    <property type="project" value="InterPro"/>
</dbReference>
<dbReference type="GO" id="GO:0016740">
    <property type="term" value="F:transferase activity"/>
    <property type="evidence" value="ECO:0007669"/>
    <property type="project" value="InterPro"/>
</dbReference>
<dbReference type="GO" id="GO:0002181">
    <property type="term" value="P:cytoplasmic translation"/>
    <property type="evidence" value="ECO:0007669"/>
    <property type="project" value="TreeGrafter"/>
</dbReference>
<dbReference type="FunFam" id="2.30.30.30:FF:000001">
    <property type="entry name" value="50S ribosomal protein L2"/>
    <property type="match status" value="1"/>
</dbReference>
<dbReference type="FunFam" id="2.40.50.140:FF:000003">
    <property type="entry name" value="50S ribosomal protein L2"/>
    <property type="match status" value="1"/>
</dbReference>
<dbReference type="FunFam" id="4.10.950.10:FF:000001">
    <property type="entry name" value="50S ribosomal protein L2"/>
    <property type="match status" value="1"/>
</dbReference>
<dbReference type="Gene3D" id="2.30.30.30">
    <property type="match status" value="1"/>
</dbReference>
<dbReference type="Gene3D" id="2.40.50.140">
    <property type="entry name" value="Nucleic acid-binding proteins"/>
    <property type="match status" value="1"/>
</dbReference>
<dbReference type="Gene3D" id="4.10.950.10">
    <property type="entry name" value="Ribosomal protein L2, domain 3"/>
    <property type="match status" value="1"/>
</dbReference>
<dbReference type="HAMAP" id="MF_01320_B">
    <property type="entry name" value="Ribosomal_uL2_B"/>
    <property type="match status" value="1"/>
</dbReference>
<dbReference type="InterPro" id="IPR012340">
    <property type="entry name" value="NA-bd_OB-fold"/>
</dbReference>
<dbReference type="InterPro" id="IPR014722">
    <property type="entry name" value="Rib_uL2_dom2"/>
</dbReference>
<dbReference type="InterPro" id="IPR002171">
    <property type="entry name" value="Ribosomal_uL2"/>
</dbReference>
<dbReference type="InterPro" id="IPR005880">
    <property type="entry name" value="Ribosomal_uL2_bac/org-type"/>
</dbReference>
<dbReference type="InterPro" id="IPR022669">
    <property type="entry name" value="Ribosomal_uL2_C"/>
</dbReference>
<dbReference type="InterPro" id="IPR022671">
    <property type="entry name" value="Ribosomal_uL2_CS"/>
</dbReference>
<dbReference type="InterPro" id="IPR014726">
    <property type="entry name" value="Ribosomal_uL2_dom3"/>
</dbReference>
<dbReference type="InterPro" id="IPR022666">
    <property type="entry name" value="Ribosomal_uL2_RNA-bd_dom"/>
</dbReference>
<dbReference type="InterPro" id="IPR008991">
    <property type="entry name" value="Translation_prot_SH3-like_sf"/>
</dbReference>
<dbReference type="NCBIfam" id="TIGR01171">
    <property type="entry name" value="rplB_bact"/>
    <property type="match status" value="1"/>
</dbReference>
<dbReference type="PANTHER" id="PTHR13691:SF5">
    <property type="entry name" value="LARGE RIBOSOMAL SUBUNIT PROTEIN UL2M"/>
    <property type="match status" value="1"/>
</dbReference>
<dbReference type="PANTHER" id="PTHR13691">
    <property type="entry name" value="RIBOSOMAL PROTEIN L2"/>
    <property type="match status" value="1"/>
</dbReference>
<dbReference type="Pfam" id="PF00181">
    <property type="entry name" value="Ribosomal_L2"/>
    <property type="match status" value="1"/>
</dbReference>
<dbReference type="Pfam" id="PF03947">
    <property type="entry name" value="Ribosomal_L2_C"/>
    <property type="match status" value="1"/>
</dbReference>
<dbReference type="PIRSF" id="PIRSF002158">
    <property type="entry name" value="Ribosomal_L2"/>
    <property type="match status" value="1"/>
</dbReference>
<dbReference type="SMART" id="SM01383">
    <property type="entry name" value="Ribosomal_L2"/>
    <property type="match status" value="1"/>
</dbReference>
<dbReference type="SMART" id="SM01382">
    <property type="entry name" value="Ribosomal_L2_C"/>
    <property type="match status" value="1"/>
</dbReference>
<dbReference type="SUPFAM" id="SSF50249">
    <property type="entry name" value="Nucleic acid-binding proteins"/>
    <property type="match status" value="1"/>
</dbReference>
<dbReference type="SUPFAM" id="SSF50104">
    <property type="entry name" value="Translation proteins SH3-like domain"/>
    <property type="match status" value="1"/>
</dbReference>
<dbReference type="PROSITE" id="PS00467">
    <property type="entry name" value="RIBOSOMAL_L2"/>
    <property type="match status" value="1"/>
</dbReference>
<sequence>MAIKTYKPYTPSRRYITGVSSEDITAKASVRSLLVKLPAHAGRNNNGRITSRHKEAGAKKLYRIIDFKRRKFGIEGKVEAIEYDPYRNCRIALISYRDGEKRYILQPKGLGVGDVVCAAESGLDIKPGNAMKLRNIPVGTIVHNIELKPGKGGQMIRSAGAYAQLMGKEEKYVILRLASGEMRQVLAECMASIGEVGNEEWSNVTIGKAGRNRHRGIRPQTRGSAMNPVDHPHGGGEGKKNSGRHPVTPWGKPTKGAKTRRKKASDKLIISRRKGK</sequence>
<gene>
    <name evidence="1" type="primary">rplB</name>
    <name type="ordered locus">Cla_0062</name>
</gene>
<comment type="function">
    <text evidence="1">One of the primary rRNA binding proteins. Required for association of the 30S and 50S subunits to form the 70S ribosome, for tRNA binding and peptide bond formation. It has been suggested to have peptidyltransferase activity; this is somewhat controversial. Makes several contacts with the 16S rRNA in the 70S ribosome.</text>
</comment>
<comment type="subunit">
    <text evidence="1">Part of the 50S ribosomal subunit. Forms a bridge to the 30S subunit in the 70S ribosome.</text>
</comment>
<comment type="similarity">
    <text evidence="1">Belongs to the universal ribosomal protein uL2 family.</text>
</comment>
<evidence type="ECO:0000255" key="1">
    <source>
        <dbReference type="HAMAP-Rule" id="MF_01320"/>
    </source>
</evidence>
<evidence type="ECO:0000256" key="2">
    <source>
        <dbReference type="SAM" id="MobiDB-lite"/>
    </source>
</evidence>
<evidence type="ECO:0000305" key="3"/>
<reference key="1">
    <citation type="journal article" date="2008" name="Foodborne Pathog. Dis.">
        <title>The complete genome sequence and analysis of the human pathogen Campylobacter lari.</title>
        <authorList>
            <person name="Miller W.G."/>
            <person name="Wang G."/>
            <person name="Binnewies T.T."/>
            <person name="Parker C.T."/>
        </authorList>
    </citation>
    <scope>NUCLEOTIDE SEQUENCE [LARGE SCALE GENOMIC DNA]</scope>
    <source>
        <strain>RM2100 / D67 / ATCC BAA-1060</strain>
    </source>
</reference>
<keyword id="KW-1185">Reference proteome</keyword>
<keyword id="KW-0687">Ribonucleoprotein</keyword>
<keyword id="KW-0689">Ribosomal protein</keyword>
<keyword id="KW-0694">RNA-binding</keyword>
<keyword id="KW-0699">rRNA-binding</keyword>
<proteinExistence type="inferred from homology"/>